<reference key="1">
    <citation type="journal article" date="1999" name="FEBS Lett.">
        <title>Isolation and characterization of a calendic acid producing (8,11)-linoleoyl desaturase.</title>
        <authorList>
            <person name="Fritsche K."/>
            <person name="Hornung E."/>
            <person name="Peitzsch N."/>
            <person name="Renz A."/>
            <person name="Feussner I."/>
        </authorList>
    </citation>
    <scope>NUCLEOTIDE SEQUENCE [MRNA]</scope>
    <scope>FUNCTION</scope>
    <source>
        <tissue>Seed</tissue>
    </source>
</reference>
<organism evidence="5">
    <name type="scientific">Calendula officinalis</name>
    <name type="common">Pot marigold</name>
    <dbReference type="NCBI Taxonomy" id="41496"/>
    <lineage>
        <taxon>Eukaryota</taxon>
        <taxon>Viridiplantae</taxon>
        <taxon>Streptophyta</taxon>
        <taxon>Embryophyta</taxon>
        <taxon>Tracheophyta</taxon>
        <taxon>Spermatophyta</taxon>
        <taxon>Magnoliopsida</taxon>
        <taxon>eudicotyledons</taxon>
        <taxon>Gunneridae</taxon>
        <taxon>Pentapetalae</taxon>
        <taxon>asterids</taxon>
        <taxon>campanulids</taxon>
        <taxon>Asterales</taxon>
        <taxon>Asteraceae</taxon>
        <taxon>Asteroideae</taxon>
        <taxon>Calenduleae</taxon>
        <taxon>Calendula</taxon>
    </lineage>
</organism>
<accession>Q9SCG2</accession>
<comment type="function">
    <text evidence="2">Converts linoleic acid into a conjugated octadecatrienoic acid, probably calendic acid.</text>
</comment>
<comment type="pathway">
    <text>Lipid metabolism; polyunsaturated fatty acid biosynthesis.</text>
</comment>
<comment type="subcellular location">
    <subcellularLocation>
        <location evidence="1">Membrane</location>
        <topology evidence="1">Multi-pass membrane protein</topology>
    </subcellularLocation>
</comment>
<comment type="domain">
    <text evidence="4">The histidine box domains may contain the active site and/or be involved in metal ion binding.</text>
</comment>
<comment type="similarity">
    <text evidence="4">Belongs to the fatty acid desaturase type 1 family.</text>
</comment>
<gene>
    <name evidence="3" type="primary">DES8.11</name>
</gene>
<evidence type="ECO:0000255" key="1"/>
<evidence type="ECO:0000269" key="2">
    <source>
    </source>
</evidence>
<evidence type="ECO:0000303" key="3">
    <source>
    </source>
</evidence>
<evidence type="ECO:0000305" key="4"/>
<evidence type="ECO:0000312" key="5">
    <source>
        <dbReference type="EMBL" id="CAB64256.1"/>
    </source>
</evidence>
<name>FAD2B_CALOF</name>
<sequence>MGAGGRMSDPSEGKNILERVPVDPPFTLSDLKKAIPTHCFERSVIRSSYYVVHDLIVAYVFYYLANTYIPLIPTPLAYLAWPVYWFCQASILTGLWVIGHECGHHAFSDYQLIDDIVGFVLHSALLTPYFSWKYSHRNHHANTNSLDNDEVYIPKRKSKVKIYSKLLNNPPGRVFTLVFRLTLGFPLYLLTNISGKKYGRFANHFDPMSPIFNDRERVQVLLSDFGLLAVFYAIKLLVAAKGAAWVINMYAIPVLGVSVFFVLITYLHHTHLSLPHYDSTEWNWIKGALSTIDRDFGFLNRVFHDVTHTHVLHHLISYIPHYHAKEARDAIKPVLGEYYKIDRTPIFKAMYREAKECIYIEPDEDSEHKGVFWYHKM</sequence>
<protein>
    <recommendedName>
        <fullName>Delta(12) fatty acid desaturase DES8.11</fullName>
        <ecNumber evidence="4">1.14.19.-</ecNumber>
    </recommendedName>
    <alternativeName>
        <fullName evidence="3">(8,11)-linoleoyl desaturase</fullName>
        <shortName evidence="3">CoDes8,11</shortName>
    </alternativeName>
</protein>
<dbReference type="EC" id="1.14.19.-" evidence="4"/>
<dbReference type="EMBL" id="AJ245938">
    <property type="protein sequence ID" value="CAB64256.1"/>
    <property type="molecule type" value="mRNA"/>
</dbReference>
<dbReference type="SMR" id="Q9SCG2"/>
<dbReference type="UniPathway" id="UPA00658"/>
<dbReference type="GO" id="GO:0016020">
    <property type="term" value="C:membrane"/>
    <property type="evidence" value="ECO:0007669"/>
    <property type="project" value="UniProtKB-SubCell"/>
</dbReference>
<dbReference type="GO" id="GO:0016717">
    <property type="term" value="F:oxidoreductase activity, acting on paired donors, with oxidation of a pair of donors resulting in the reduction of molecular oxygen to two molecules of water"/>
    <property type="evidence" value="ECO:0007669"/>
    <property type="project" value="InterPro"/>
</dbReference>
<dbReference type="GO" id="GO:0006636">
    <property type="term" value="P:unsaturated fatty acid biosynthetic process"/>
    <property type="evidence" value="ECO:0007669"/>
    <property type="project" value="UniProtKB-UniPathway"/>
</dbReference>
<dbReference type="CDD" id="cd03507">
    <property type="entry name" value="Delta12-FADS-like"/>
    <property type="match status" value="1"/>
</dbReference>
<dbReference type="InterPro" id="IPR005804">
    <property type="entry name" value="FA_desaturase_dom"/>
</dbReference>
<dbReference type="InterPro" id="IPR021863">
    <property type="entry name" value="FAS_N"/>
</dbReference>
<dbReference type="InterPro" id="IPR012171">
    <property type="entry name" value="Fatty_acid_desaturase"/>
</dbReference>
<dbReference type="PANTHER" id="PTHR32100">
    <property type="entry name" value="OMEGA-6 FATTY ACID DESATURASE, CHLOROPLASTIC"/>
    <property type="match status" value="1"/>
</dbReference>
<dbReference type="Pfam" id="PF11960">
    <property type="entry name" value="DUF3474"/>
    <property type="match status" value="1"/>
</dbReference>
<dbReference type="Pfam" id="PF00487">
    <property type="entry name" value="FA_desaturase"/>
    <property type="match status" value="1"/>
</dbReference>
<keyword id="KW-0275">Fatty acid biosynthesis</keyword>
<keyword id="KW-0276">Fatty acid metabolism</keyword>
<keyword id="KW-0444">Lipid biosynthesis</keyword>
<keyword id="KW-0443">Lipid metabolism</keyword>
<keyword id="KW-0472">Membrane</keyword>
<keyword id="KW-0560">Oxidoreductase</keyword>
<keyword id="KW-0812">Transmembrane</keyword>
<keyword id="KW-1133">Transmembrane helix</keyword>
<proteinExistence type="evidence at transcript level"/>
<feature type="chain" id="PRO_0000435421" description="Delta(12) fatty acid desaturase DES8.11">
    <location>
        <begin position="1"/>
        <end position="377"/>
    </location>
</feature>
<feature type="transmembrane region" description="Helical" evidence="1">
    <location>
        <begin position="55"/>
        <end position="75"/>
    </location>
</feature>
<feature type="transmembrane region" description="Helical" evidence="1">
    <location>
        <begin position="79"/>
        <end position="99"/>
    </location>
</feature>
<feature type="transmembrane region" description="Helical" evidence="1">
    <location>
        <begin position="112"/>
        <end position="132"/>
    </location>
</feature>
<feature type="transmembrane region" description="Helical" evidence="1">
    <location>
        <begin position="174"/>
        <end position="194"/>
    </location>
</feature>
<feature type="transmembrane region" description="Helical" evidence="1">
    <location>
        <begin position="220"/>
        <end position="240"/>
    </location>
</feature>
<feature type="transmembrane region" description="Helical" evidence="1">
    <location>
        <begin position="244"/>
        <end position="264"/>
    </location>
</feature>
<feature type="short sequence motif" description="Histidine box-1" evidence="4">
    <location>
        <begin position="100"/>
        <end position="104"/>
    </location>
</feature>
<feature type="short sequence motif" description="Histidine box-2" evidence="4">
    <location>
        <begin position="136"/>
        <end position="140"/>
    </location>
</feature>
<feature type="short sequence motif" description="Histidine box-3" evidence="4">
    <location>
        <begin position="310"/>
        <end position="314"/>
    </location>
</feature>